<protein>
    <recommendedName>
        <fullName evidence="1">Bifunctional protein FolD</fullName>
    </recommendedName>
    <domain>
        <recommendedName>
            <fullName evidence="1">Methylenetetrahydrofolate dehydrogenase</fullName>
            <ecNumber evidence="1">1.5.1.5</ecNumber>
        </recommendedName>
    </domain>
    <domain>
        <recommendedName>
            <fullName evidence="1">Methenyltetrahydrofolate cyclohydrolase</fullName>
            <ecNumber evidence="1">3.5.4.9</ecNumber>
        </recommendedName>
    </domain>
</protein>
<name>FOLD_PROM3</name>
<reference key="1">
    <citation type="journal article" date="2007" name="PLoS Genet.">
        <title>Patterns and implications of gene gain and loss in the evolution of Prochlorococcus.</title>
        <authorList>
            <person name="Kettler G.C."/>
            <person name="Martiny A.C."/>
            <person name="Huang K."/>
            <person name="Zucker J."/>
            <person name="Coleman M.L."/>
            <person name="Rodrigue S."/>
            <person name="Chen F."/>
            <person name="Lapidus A."/>
            <person name="Ferriera S."/>
            <person name="Johnson J."/>
            <person name="Steglich C."/>
            <person name="Church G.M."/>
            <person name="Richardson P."/>
            <person name="Chisholm S.W."/>
        </authorList>
    </citation>
    <scope>NUCLEOTIDE SEQUENCE [LARGE SCALE GENOMIC DNA]</scope>
    <source>
        <strain>MIT 9303</strain>
    </source>
</reference>
<sequence>MALRLDGKQLAAELEQRLQAEIAAGLVQAGRPPGLAVVRIGDDPASGVYVANKQKACGRIGMASYLSHLPAKVPAAEVLATIQSLNLDERVDGILLQLPLPKGLDEGPLLAAIDPEKDADGLHTLNLGRLLKGEPGPRSCTPGGVMALLARHQIPLAGKRAVVIGRSILVGQPMALMLQAANATVSVAHSHTDDLASLTQQADVLVVAAGRARMIGSEHVKPGAVVVDVGIHRLPADPELGPQVKARLCGDVRAQEVEPLASALTPVPGGVGPMTVTMLLVNTVARWQQHCGLPFGLRDLLV</sequence>
<organism>
    <name type="scientific">Prochlorococcus marinus (strain MIT 9303)</name>
    <dbReference type="NCBI Taxonomy" id="59922"/>
    <lineage>
        <taxon>Bacteria</taxon>
        <taxon>Bacillati</taxon>
        <taxon>Cyanobacteriota</taxon>
        <taxon>Cyanophyceae</taxon>
        <taxon>Synechococcales</taxon>
        <taxon>Prochlorococcaceae</taxon>
        <taxon>Prochlorococcus</taxon>
    </lineage>
</organism>
<accession>A2C873</accession>
<dbReference type="EC" id="1.5.1.5" evidence="1"/>
<dbReference type="EC" id="3.5.4.9" evidence="1"/>
<dbReference type="EMBL" id="CP000554">
    <property type="protein sequence ID" value="ABM77683.1"/>
    <property type="molecule type" value="Genomic_DNA"/>
</dbReference>
<dbReference type="RefSeq" id="WP_011825589.1">
    <property type="nucleotide sequence ID" value="NC_008820.1"/>
</dbReference>
<dbReference type="SMR" id="A2C873"/>
<dbReference type="STRING" id="59922.P9303_09321"/>
<dbReference type="KEGG" id="pmf:P9303_09321"/>
<dbReference type="HOGENOM" id="CLU_034045_2_1_3"/>
<dbReference type="BioCyc" id="PMAR59922:G1G80-843-MONOMER"/>
<dbReference type="UniPathway" id="UPA00193"/>
<dbReference type="Proteomes" id="UP000002274">
    <property type="component" value="Chromosome"/>
</dbReference>
<dbReference type="GO" id="GO:0005829">
    <property type="term" value="C:cytosol"/>
    <property type="evidence" value="ECO:0007669"/>
    <property type="project" value="TreeGrafter"/>
</dbReference>
<dbReference type="GO" id="GO:0004477">
    <property type="term" value="F:methenyltetrahydrofolate cyclohydrolase activity"/>
    <property type="evidence" value="ECO:0007669"/>
    <property type="project" value="UniProtKB-UniRule"/>
</dbReference>
<dbReference type="GO" id="GO:0004488">
    <property type="term" value="F:methylenetetrahydrofolate dehydrogenase (NADP+) activity"/>
    <property type="evidence" value="ECO:0007669"/>
    <property type="project" value="UniProtKB-UniRule"/>
</dbReference>
<dbReference type="GO" id="GO:0000105">
    <property type="term" value="P:L-histidine biosynthetic process"/>
    <property type="evidence" value="ECO:0007669"/>
    <property type="project" value="UniProtKB-KW"/>
</dbReference>
<dbReference type="GO" id="GO:0009086">
    <property type="term" value="P:methionine biosynthetic process"/>
    <property type="evidence" value="ECO:0007669"/>
    <property type="project" value="UniProtKB-KW"/>
</dbReference>
<dbReference type="GO" id="GO:0006164">
    <property type="term" value="P:purine nucleotide biosynthetic process"/>
    <property type="evidence" value="ECO:0007669"/>
    <property type="project" value="UniProtKB-KW"/>
</dbReference>
<dbReference type="GO" id="GO:0035999">
    <property type="term" value="P:tetrahydrofolate interconversion"/>
    <property type="evidence" value="ECO:0007669"/>
    <property type="project" value="UniProtKB-UniRule"/>
</dbReference>
<dbReference type="CDD" id="cd01080">
    <property type="entry name" value="NAD_bind_m-THF_DH_Cyclohyd"/>
    <property type="match status" value="1"/>
</dbReference>
<dbReference type="FunFam" id="3.40.50.720:FF:000006">
    <property type="entry name" value="Bifunctional protein FolD"/>
    <property type="match status" value="1"/>
</dbReference>
<dbReference type="FunFam" id="3.40.50.10860:FF:000005">
    <property type="entry name" value="C-1-tetrahydrofolate synthase, cytoplasmic, putative"/>
    <property type="match status" value="1"/>
</dbReference>
<dbReference type="Gene3D" id="3.40.50.10860">
    <property type="entry name" value="Leucine Dehydrogenase, chain A, domain 1"/>
    <property type="match status" value="1"/>
</dbReference>
<dbReference type="Gene3D" id="3.40.50.720">
    <property type="entry name" value="NAD(P)-binding Rossmann-like Domain"/>
    <property type="match status" value="1"/>
</dbReference>
<dbReference type="HAMAP" id="MF_01576">
    <property type="entry name" value="THF_DHG_CYH"/>
    <property type="match status" value="1"/>
</dbReference>
<dbReference type="InterPro" id="IPR046346">
    <property type="entry name" value="Aminoacid_DH-like_N_sf"/>
</dbReference>
<dbReference type="InterPro" id="IPR036291">
    <property type="entry name" value="NAD(P)-bd_dom_sf"/>
</dbReference>
<dbReference type="InterPro" id="IPR000672">
    <property type="entry name" value="THF_DH/CycHdrlase"/>
</dbReference>
<dbReference type="InterPro" id="IPR020630">
    <property type="entry name" value="THF_DH/CycHdrlase_cat_dom"/>
</dbReference>
<dbReference type="InterPro" id="IPR020867">
    <property type="entry name" value="THF_DH/CycHdrlase_CS"/>
</dbReference>
<dbReference type="InterPro" id="IPR020631">
    <property type="entry name" value="THF_DH/CycHdrlase_NAD-bd_dom"/>
</dbReference>
<dbReference type="NCBIfam" id="NF010783">
    <property type="entry name" value="PRK14186.1"/>
    <property type="match status" value="1"/>
</dbReference>
<dbReference type="PANTHER" id="PTHR48099:SF5">
    <property type="entry name" value="C-1-TETRAHYDROFOLATE SYNTHASE, CYTOPLASMIC"/>
    <property type="match status" value="1"/>
</dbReference>
<dbReference type="PANTHER" id="PTHR48099">
    <property type="entry name" value="C-1-TETRAHYDROFOLATE SYNTHASE, CYTOPLASMIC-RELATED"/>
    <property type="match status" value="1"/>
</dbReference>
<dbReference type="Pfam" id="PF00763">
    <property type="entry name" value="THF_DHG_CYH"/>
    <property type="match status" value="1"/>
</dbReference>
<dbReference type="Pfam" id="PF02882">
    <property type="entry name" value="THF_DHG_CYH_C"/>
    <property type="match status" value="1"/>
</dbReference>
<dbReference type="PRINTS" id="PR00085">
    <property type="entry name" value="THFDHDRGNASE"/>
</dbReference>
<dbReference type="SUPFAM" id="SSF53223">
    <property type="entry name" value="Aminoacid dehydrogenase-like, N-terminal domain"/>
    <property type="match status" value="1"/>
</dbReference>
<dbReference type="SUPFAM" id="SSF51735">
    <property type="entry name" value="NAD(P)-binding Rossmann-fold domains"/>
    <property type="match status" value="1"/>
</dbReference>
<dbReference type="PROSITE" id="PS00767">
    <property type="entry name" value="THF_DHG_CYH_2"/>
    <property type="match status" value="1"/>
</dbReference>
<feature type="chain" id="PRO_0000305863" description="Bifunctional protein FolD">
    <location>
        <begin position="1"/>
        <end position="302"/>
    </location>
</feature>
<feature type="binding site" evidence="1">
    <location>
        <begin position="165"/>
        <end position="167"/>
    </location>
    <ligand>
        <name>NADP(+)</name>
        <dbReference type="ChEBI" id="CHEBI:58349"/>
    </ligand>
</feature>
<feature type="binding site" evidence="1">
    <location>
        <position position="190"/>
    </location>
    <ligand>
        <name>NADP(+)</name>
        <dbReference type="ChEBI" id="CHEBI:58349"/>
    </ligand>
</feature>
<feature type="binding site" evidence="1">
    <location>
        <position position="231"/>
    </location>
    <ligand>
        <name>NADP(+)</name>
        <dbReference type="ChEBI" id="CHEBI:58349"/>
    </ligand>
</feature>
<gene>
    <name evidence="1" type="primary">folD</name>
    <name type="ordered locus">P9303_09321</name>
</gene>
<keyword id="KW-0028">Amino-acid biosynthesis</keyword>
<keyword id="KW-0368">Histidine biosynthesis</keyword>
<keyword id="KW-0378">Hydrolase</keyword>
<keyword id="KW-0486">Methionine biosynthesis</keyword>
<keyword id="KW-0511">Multifunctional enzyme</keyword>
<keyword id="KW-0521">NADP</keyword>
<keyword id="KW-0554">One-carbon metabolism</keyword>
<keyword id="KW-0560">Oxidoreductase</keyword>
<keyword id="KW-0658">Purine biosynthesis</keyword>
<evidence type="ECO:0000255" key="1">
    <source>
        <dbReference type="HAMAP-Rule" id="MF_01576"/>
    </source>
</evidence>
<proteinExistence type="inferred from homology"/>
<comment type="function">
    <text evidence="1">Catalyzes the oxidation of 5,10-methylenetetrahydrofolate to 5,10-methenyltetrahydrofolate and then the hydrolysis of 5,10-methenyltetrahydrofolate to 10-formyltetrahydrofolate.</text>
</comment>
<comment type="catalytic activity">
    <reaction evidence="1">
        <text>(6R)-5,10-methylene-5,6,7,8-tetrahydrofolate + NADP(+) = (6R)-5,10-methenyltetrahydrofolate + NADPH</text>
        <dbReference type="Rhea" id="RHEA:22812"/>
        <dbReference type="ChEBI" id="CHEBI:15636"/>
        <dbReference type="ChEBI" id="CHEBI:57455"/>
        <dbReference type="ChEBI" id="CHEBI:57783"/>
        <dbReference type="ChEBI" id="CHEBI:58349"/>
        <dbReference type="EC" id="1.5.1.5"/>
    </reaction>
</comment>
<comment type="catalytic activity">
    <reaction evidence="1">
        <text>(6R)-5,10-methenyltetrahydrofolate + H2O = (6R)-10-formyltetrahydrofolate + H(+)</text>
        <dbReference type="Rhea" id="RHEA:23700"/>
        <dbReference type="ChEBI" id="CHEBI:15377"/>
        <dbReference type="ChEBI" id="CHEBI:15378"/>
        <dbReference type="ChEBI" id="CHEBI:57455"/>
        <dbReference type="ChEBI" id="CHEBI:195366"/>
        <dbReference type="EC" id="3.5.4.9"/>
    </reaction>
</comment>
<comment type="pathway">
    <text evidence="1">One-carbon metabolism; tetrahydrofolate interconversion.</text>
</comment>
<comment type="subunit">
    <text evidence="1">Homodimer.</text>
</comment>
<comment type="similarity">
    <text evidence="1">Belongs to the tetrahydrofolate dehydrogenase/cyclohydrolase family.</text>
</comment>